<keyword id="KW-0963">Cytoplasm</keyword>
<keyword id="KW-0460">Magnesium</keyword>
<keyword id="KW-0479">Metal-binding</keyword>
<keyword id="KW-0548">Nucleotidyltransferase</keyword>
<keyword id="KW-0694">RNA-binding</keyword>
<keyword id="KW-0808">Transferase</keyword>
<sequence>MFNEITKSVTWNGQVLELSTGKIARQADGAVTVKMGNSVLLCTAVVANKAKEGIGFLPLTINYREMAYAAGKIPGGFFKHEGKASDREVLVSRLIDRPIRPLFHPAFVNETHVTCSVLSYDPETPVDILAIIGASAALSLSPAPYLEIVAASKVGLINGEFVLNPTLALLKTSQLDLVVAGTSDSVMMVESEAHLLSEEQMLEAVKFGFESFQPVIKIIKELAEEAKKPKLEMQALYPASLKKEIEKLFVKEIEQAFAIKSKQERSTNLDLIPEKVLTHFVSDIENKKYSNYQIESALKAIESDILRNEILEKNRRIDGRSTTDIRQIACEIGLLPSAHGSALFTRGETQSLVSTTFGTSLDEQIVDSLEGEYKERFMLNYIFPPYSVNEAMPMKAPSRREVGHGKLAWRAINPILPNKVQFPYSIRVVAETTESNGSSSMATVCGSSLALMYAGVPIKAPVAGIAMGLVKEGKNFAVLSDILGDEDYFGDMDFKVAGTSEGITALQMDIKISGVDFKIMKVALEQARLGRLHILEQMNKVISKPNNELSKNAPSTTTIKIDKDKIRDIIGPGGKVIKEICETSGAKIDISDDGTVSVYASDRDKLKVALDKIKAIVVEPEIGEIFNGTVVKVLDSGAFINYVGNKDGFVHISEVSGERIETVSSVLKQGDIVKVKLIGFDNKGKAKLTIKNADKDKSSNNTKPKTNVNNTKDNSEPEQRRDSSKKRAWNEDNNAETAEVITERKYFN</sequence>
<protein>
    <recommendedName>
        <fullName evidence="1">Polyribonucleotide nucleotidyltransferase</fullName>
        <ecNumber evidence="1">2.7.7.8</ecNumber>
    </recommendedName>
    <alternativeName>
        <fullName evidence="1">Polynucleotide phosphorylase</fullName>
        <shortName evidence="1">PNPase</shortName>
    </alternativeName>
</protein>
<comment type="function">
    <text evidence="1">Involved in mRNA degradation. Catalyzes the phosphorolysis of single-stranded polyribonucleotides processively in the 3'- to 5'-direction.</text>
</comment>
<comment type="catalytic activity">
    <reaction evidence="1">
        <text>RNA(n+1) + phosphate = RNA(n) + a ribonucleoside 5'-diphosphate</text>
        <dbReference type="Rhea" id="RHEA:22096"/>
        <dbReference type="Rhea" id="RHEA-COMP:14527"/>
        <dbReference type="Rhea" id="RHEA-COMP:17342"/>
        <dbReference type="ChEBI" id="CHEBI:43474"/>
        <dbReference type="ChEBI" id="CHEBI:57930"/>
        <dbReference type="ChEBI" id="CHEBI:140395"/>
        <dbReference type="EC" id="2.7.7.8"/>
    </reaction>
</comment>
<comment type="cofactor">
    <cofactor evidence="1">
        <name>Mg(2+)</name>
        <dbReference type="ChEBI" id="CHEBI:18420"/>
    </cofactor>
</comment>
<comment type="subcellular location">
    <subcellularLocation>
        <location evidence="1">Cytoplasm</location>
    </subcellularLocation>
</comment>
<comment type="similarity">
    <text evidence="1">Belongs to the polyribonucleotide nucleotidyltransferase family.</text>
</comment>
<reference key="1">
    <citation type="journal article" date="2009" name="BMC Genomics">
        <title>Analysis of the Rickettsia africae genome reveals that virulence acquisition in Rickettsia species may be explained by genome reduction.</title>
        <authorList>
            <person name="Fournier P.-E."/>
            <person name="El Karkouri K."/>
            <person name="Leroy Q."/>
            <person name="Robert C."/>
            <person name="Giumelli B."/>
            <person name="Renesto P."/>
            <person name="Socolovschi C."/>
            <person name="Parola P."/>
            <person name="Audic S."/>
            <person name="Raoult D."/>
        </authorList>
    </citation>
    <scope>NUCLEOTIDE SEQUENCE [LARGE SCALE GENOMIC DNA]</scope>
    <source>
        <strain>ESF-5</strain>
    </source>
</reference>
<proteinExistence type="inferred from homology"/>
<feature type="chain" id="PRO_1000215667" description="Polyribonucleotide nucleotidyltransferase">
    <location>
        <begin position="1"/>
        <end position="748"/>
    </location>
</feature>
<feature type="domain" description="KH" evidence="1">
    <location>
        <begin position="554"/>
        <end position="613"/>
    </location>
</feature>
<feature type="domain" description="S1 motif" evidence="1">
    <location>
        <begin position="623"/>
        <end position="691"/>
    </location>
</feature>
<feature type="region of interest" description="Disordered" evidence="2">
    <location>
        <begin position="691"/>
        <end position="748"/>
    </location>
</feature>
<feature type="compositionally biased region" description="Low complexity" evidence="2">
    <location>
        <begin position="699"/>
        <end position="712"/>
    </location>
</feature>
<feature type="compositionally biased region" description="Basic and acidic residues" evidence="2">
    <location>
        <begin position="713"/>
        <end position="722"/>
    </location>
</feature>
<feature type="binding site" evidence="1">
    <location>
        <position position="487"/>
    </location>
    <ligand>
        <name>Mg(2+)</name>
        <dbReference type="ChEBI" id="CHEBI:18420"/>
    </ligand>
</feature>
<feature type="binding site" evidence="1">
    <location>
        <position position="493"/>
    </location>
    <ligand>
        <name>Mg(2+)</name>
        <dbReference type="ChEBI" id="CHEBI:18420"/>
    </ligand>
</feature>
<accession>C3PNK2</accession>
<name>PNP_RICAE</name>
<dbReference type="EC" id="2.7.7.8" evidence="1"/>
<dbReference type="EMBL" id="CP001612">
    <property type="protein sequence ID" value="ACP53512.1"/>
    <property type="molecule type" value="Genomic_DNA"/>
</dbReference>
<dbReference type="RefSeq" id="WP_012719724.1">
    <property type="nucleotide sequence ID" value="NC_012633.1"/>
</dbReference>
<dbReference type="SMR" id="C3PNK2"/>
<dbReference type="KEGG" id="raf:RAF_ORF0608"/>
<dbReference type="HOGENOM" id="CLU_004217_2_2_5"/>
<dbReference type="Proteomes" id="UP000002305">
    <property type="component" value="Chromosome"/>
</dbReference>
<dbReference type="GO" id="GO:0005829">
    <property type="term" value="C:cytosol"/>
    <property type="evidence" value="ECO:0007669"/>
    <property type="project" value="TreeGrafter"/>
</dbReference>
<dbReference type="GO" id="GO:0000175">
    <property type="term" value="F:3'-5'-RNA exonuclease activity"/>
    <property type="evidence" value="ECO:0007669"/>
    <property type="project" value="TreeGrafter"/>
</dbReference>
<dbReference type="GO" id="GO:0000287">
    <property type="term" value="F:magnesium ion binding"/>
    <property type="evidence" value="ECO:0007669"/>
    <property type="project" value="UniProtKB-UniRule"/>
</dbReference>
<dbReference type="GO" id="GO:0004654">
    <property type="term" value="F:polyribonucleotide nucleotidyltransferase activity"/>
    <property type="evidence" value="ECO:0007669"/>
    <property type="project" value="UniProtKB-UniRule"/>
</dbReference>
<dbReference type="GO" id="GO:0003723">
    <property type="term" value="F:RNA binding"/>
    <property type="evidence" value="ECO:0007669"/>
    <property type="project" value="UniProtKB-UniRule"/>
</dbReference>
<dbReference type="GO" id="GO:0006402">
    <property type="term" value="P:mRNA catabolic process"/>
    <property type="evidence" value="ECO:0007669"/>
    <property type="project" value="UniProtKB-UniRule"/>
</dbReference>
<dbReference type="GO" id="GO:0006396">
    <property type="term" value="P:RNA processing"/>
    <property type="evidence" value="ECO:0007669"/>
    <property type="project" value="InterPro"/>
</dbReference>
<dbReference type="CDD" id="cd02393">
    <property type="entry name" value="KH-I_PNPase"/>
    <property type="match status" value="1"/>
</dbReference>
<dbReference type="CDD" id="cd11363">
    <property type="entry name" value="RNase_PH_PNPase_1"/>
    <property type="match status" value="1"/>
</dbReference>
<dbReference type="CDD" id="cd11364">
    <property type="entry name" value="RNase_PH_PNPase_2"/>
    <property type="match status" value="1"/>
</dbReference>
<dbReference type="FunFam" id="3.30.1370.10:FF:000001">
    <property type="entry name" value="Polyribonucleotide nucleotidyltransferase"/>
    <property type="match status" value="1"/>
</dbReference>
<dbReference type="FunFam" id="3.30.230.70:FF:000001">
    <property type="entry name" value="Polyribonucleotide nucleotidyltransferase"/>
    <property type="match status" value="1"/>
</dbReference>
<dbReference type="FunFam" id="3.30.230.70:FF:000002">
    <property type="entry name" value="Polyribonucleotide nucleotidyltransferase"/>
    <property type="match status" value="1"/>
</dbReference>
<dbReference type="FunFam" id="2.40.50.140:FF:000189">
    <property type="entry name" value="Polyribonucleotide nucleotidyltransferase, putative"/>
    <property type="match status" value="1"/>
</dbReference>
<dbReference type="Gene3D" id="3.30.230.70">
    <property type="entry name" value="GHMP Kinase, N-terminal domain"/>
    <property type="match status" value="2"/>
</dbReference>
<dbReference type="Gene3D" id="3.30.1370.10">
    <property type="entry name" value="K Homology domain, type 1"/>
    <property type="match status" value="1"/>
</dbReference>
<dbReference type="Gene3D" id="2.40.50.140">
    <property type="entry name" value="Nucleic acid-binding proteins"/>
    <property type="match status" value="1"/>
</dbReference>
<dbReference type="HAMAP" id="MF_01595">
    <property type="entry name" value="PNPase"/>
    <property type="match status" value="1"/>
</dbReference>
<dbReference type="InterPro" id="IPR001247">
    <property type="entry name" value="ExoRNase_PH_dom1"/>
</dbReference>
<dbReference type="InterPro" id="IPR015847">
    <property type="entry name" value="ExoRNase_PH_dom2"/>
</dbReference>
<dbReference type="InterPro" id="IPR036345">
    <property type="entry name" value="ExoRNase_PH_dom2_sf"/>
</dbReference>
<dbReference type="InterPro" id="IPR004087">
    <property type="entry name" value="KH_dom"/>
</dbReference>
<dbReference type="InterPro" id="IPR004088">
    <property type="entry name" value="KH_dom_type_1"/>
</dbReference>
<dbReference type="InterPro" id="IPR036612">
    <property type="entry name" value="KH_dom_type_1_sf"/>
</dbReference>
<dbReference type="InterPro" id="IPR012340">
    <property type="entry name" value="NA-bd_OB-fold"/>
</dbReference>
<dbReference type="InterPro" id="IPR012162">
    <property type="entry name" value="PNPase"/>
</dbReference>
<dbReference type="InterPro" id="IPR027408">
    <property type="entry name" value="PNPase/RNase_PH_dom_sf"/>
</dbReference>
<dbReference type="InterPro" id="IPR015848">
    <property type="entry name" value="PNPase_PH_RNA-bd_bac/org-type"/>
</dbReference>
<dbReference type="InterPro" id="IPR036456">
    <property type="entry name" value="PNPase_PH_RNA-bd_sf"/>
</dbReference>
<dbReference type="InterPro" id="IPR020568">
    <property type="entry name" value="Ribosomal_Su5_D2-typ_SF"/>
</dbReference>
<dbReference type="InterPro" id="IPR003029">
    <property type="entry name" value="S1_domain"/>
</dbReference>
<dbReference type="NCBIfam" id="TIGR03591">
    <property type="entry name" value="polynuc_phos"/>
    <property type="match status" value="1"/>
</dbReference>
<dbReference type="NCBIfam" id="NF008805">
    <property type="entry name" value="PRK11824.1"/>
    <property type="match status" value="1"/>
</dbReference>
<dbReference type="PANTHER" id="PTHR11252">
    <property type="entry name" value="POLYRIBONUCLEOTIDE NUCLEOTIDYLTRANSFERASE"/>
    <property type="match status" value="1"/>
</dbReference>
<dbReference type="PANTHER" id="PTHR11252:SF0">
    <property type="entry name" value="POLYRIBONUCLEOTIDE NUCLEOTIDYLTRANSFERASE 1, MITOCHONDRIAL"/>
    <property type="match status" value="1"/>
</dbReference>
<dbReference type="Pfam" id="PF00013">
    <property type="entry name" value="KH_1"/>
    <property type="match status" value="1"/>
</dbReference>
<dbReference type="Pfam" id="PF03726">
    <property type="entry name" value="PNPase"/>
    <property type="match status" value="1"/>
</dbReference>
<dbReference type="Pfam" id="PF01138">
    <property type="entry name" value="RNase_PH"/>
    <property type="match status" value="2"/>
</dbReference>
<dbReference type="Pfam" id="PF03725">
    <property type="entry name" value="RNase_PH_C"/>
    <property type="match status" value="1"/>
</dbReference>
<dbReference type="Pfam" id="PF00575">
    <property type="entry name" value="S1"/>
    <property type="match status" value="1"/>
</dbReference>
<dbReference type="PIRSF" id="PIRSF005499">
    <property type="entry name" value="PNPase"/>
    <property type="match status" value="1"/>
</dbReference>
<dbReference type="SMART" id="SM00322">
    <property type="entry name" value="KH"/>
    <property type="match status" value="1"/>
</dbReference>
<dbReference type="SMART" id="SM00316">
    <property type="entry name" value="S1"/>
    <property type="match status" value="1"/>
</dbReference>
<dbReference type="SUPFAM" id="SSF54791">
    <property type="entry name" value="Eukaryotic type KH-domain (KH-domain type I)"/>
    <property type="match status" value="1"/>
</dbReference>
<dbReference type="SUPFAM" id="SSF50249">
    <property type="entry name" value="Nucleic acid-binding proteins"/>
    <property type="match status" value="1"/>
</dbReference>
<dbReference type="SUPFAM" id="SSF46915">
    <property type="entry name" value="Polynucleotide phosphorylase/guanosine pentaphosphate synthase (PNPase/GPSI), domain 3"/>
    <property type="match status" value="1"/>
</dbReference>
<dbReference type="SUPFAM" id="SSF55666">
    <property type="entry name" value="Ribonuclease PH domain 2-like"/>
    <property type="match status" value="2"/>
</dbReference>
<dbReference type="SUPFAM" id="SSF54211">
    <property type="entry name" value="Ribosomal protein S5 domain 2-like"/>
    <property type="match status" value="2"/>
</dbReference>
<dbReference type="PROSITE" id="PS50084">
    <property type="entry name" value="KH_TYPE_1"/>
    <property type="match status" value="1"/>
</dbReference>
<dbReference type="PROSITE" id="PS50126">
    <property type="entry name" value="S1"/>
    <property type="match status" value="1"/>
</dbReference>
<evidence type="ECO:0000255" key="1">
    <source>
        <dbReference type="HAMAP-Rule" id="MF_01595"/>
    </source>
</evidence>
<evidence type="ECO:0000256" key="2">
    <source>
        <dbReference type="SAM" id="MobiDB-lite"/>
    </source>
</evidence>
<organism>
    <name type="scientific">Rickettsia africae (strain ESF-5)</name>
    <dbReference type="NCBI Taxonomy" id="347255"/>
    <lineage>
        <taxon>Bacteria</taxon>
        <taxon>Pseudomonadati</taxon>
        <taxon>Pseudomonadota</taxon>
        <taxon>Alphaproteobacteria</taxon>
        <taxon>Rickettsiales</taxon>
        <taxon>Rickettsiaceae</taxon>
        <taxon>Rickettsieae</taxon>
        <taxon>Rickettsia</taxon>
        <taxon>spotted fever group</taxon>
    </lineage>
</organism>
<gene>
    <name evidence="1" type="primary">pnp</name>
    <name type="ordered locus">RAF_ORF0608</name>
</gene>